<accession>Q621Z7</accession>
<accession>A8WUP6</accession>
<name>MED4_CAEBR</name>
<feature type="chain" id="PRO_0000390785" description="Mediator of RNA polymerase II transcription subunit 4">
    <location>
        <begin position="1"/>
        <end position="334"/>
    </location>
</feature>
<feature type="region of interest" description="Disordered" evidence="3">
    <location>
        <begin position="188"/>
        <end position="234"/>
    </location>
</feature>
<feature type="region of interest" description="Disordered" evidence="3">
    <location>
        <begin position="252"/>
        <end position="334"/>
    </location>
</feature>
<feature type="coiled-coil region" evidence="2">
    <location>
        <begin position="76"/>
        <end position="100"/>
    </location>
</feature>
<feature type="compositionally biased region" description="Low complexity" evidence="3">
    <location>
        <begin position="188"/>
        <end position="203"/>
    </location>
</feature>
<feature type="compositionally biased region" description="Polar residues" evidence="3">
    <location>
        <begin position="204"/>
        <end position="225"/>
    </location>
</feature>
<feature type="compositionally biased region" description="Polar residues" evidence="3">
    <location>
        <begin position="264"/>
        <end position="282"/>
    </location>
</feature>
<dbReference type="EMBL" id="HE601438">
    <property type="protein sequence ID" value="CAP24208.2"/>
    <property type="molecule type" value="Genomic_DNA"/>
</dbReference>
<dbReference type="SMR" id="Q621Z7"/>
<dbReference type="FunCoup" id="Q621Z7">
    <property type="interactions" value="1211"/>
</dbReference>
<dbReference type="STRING" id="6238.Q621Z7"/>
<dbReference type="EnsemblMetazoa" id="CBG02282.1">
    <property type="protein sequence ID" value="CBG02282.1"/>
    <property type="gene ID" value="WBGene00025360"/>
</dbReference>
<dbReference type="WormBase" id="CBG02282">
    <property type="protein sequence ID" value="CBP37598"/>
    <property type="gene ID" value="WBGene00025360"/>
    <property type="gene designation" value="Cbr-mdt-4"/>
</dbReference>
<dbReference type="eggNOG" id="KOG4552">
    <property type="taxonomic scope" value="Eukaryota"/>
</dbReference>
<dbReference type="HOGENOM" id="CLU_832182_0_0_1"/>
<dbReference type="InParanoid" id="Q621Z7"/>
<dbReference type="OMA" id="HQISKHN"/>
<dbReference type="Proteomes" id="UP000008549">
    <property type="component" value="Unassembled WGS sequence"/>
</dbReference>
<dbReference type="GO" id="GO:0070847">
    <property type="term" value="C:core mediator complex"/>
    <property type="evidence" value="ECO:0000318"/>
    <property type="project" value="GO_Central"/>
</dbReference>
<dbReference type="GO" id="GO:0016592">
    <property type="term" value="C:mediator complex"/>
    <property type="evidence" value="ECO:0007669"/>
    <property type="project" value="InterPro"/>
</dbReference>
<dbReference type="GO" id="GO:0003712">
    <property type="term" value="F:transcription coregulator activity"/>
    <property type="evidence" value="ECO:0000318"/>
    <property type="project" value="GO_Central"/>
</dbReference>
<dbReference type="GO" id="GO:0006357">
    <property type="term" value="P:regulation of transcription by RNA polymerase II"/>
    <property type="evidence" value="ECO:0000318"/>
    <property type="project" value="GO_Central"/>
</dbReference>
<dbReference type="InterPro" id="IPR019258">
    <property type="entry name" value="Mediator_Med4"/>
</dbReference>
<dbReference type="PANTHER" id="PTHR13208">
    <property type="entry name" value="MEDIATOR OF RNA POLYMERASE II TRANSCRIPTION SUBUNIT 4"/>
    <property type="match status" value="1"/>
</dbReference>
<dbReference type="PANTHER" id="PTHR13208:SF2">
    <property type="entry name" value="MEDIATOR OF RNA POLYMERASE II TRANSCRIPTION SUBUNIT 4"/>
    <property type="match status" value="1"/>
</dbReference>
<dbReference type="Pfam" id="PF10018">
    <property type="entry name" value="Med4"/>
    <property type="match status" value="1"/>
</dbReference>
<sequence>MTESDERSLRDLLLESADDLENVLKMIIDTLINREKSVMLKSGESVTNIVRLFDAKQESVRKLLQKVPEFQERESLIRTLKAHVEKRDEVIQQVENNLKACEVALTRSCFHANQKVKKMNEAALRPVNSETLIKLSHQISKHNSVSAPLTWQIGDPSRPFPQEHEFRTGQLLNPKIQSSGPQILLGKSSAQKPIIASPSASSSNGGTAPTRTVGTPLVNSATNGDYSPRTGYGAEETSPIQEQVLLGVTPNEKQWQNPPMPGAATSSQSPLSGAPQSPSSPSVKLKISGIPNRPGDIDQVQEVRDVEQMSSDSSNSSDSSDDEGSSKKTRGRNK</sequence>
<proteinExistence type="inferred from homology"/>
<protein>
    <recommendedName>
        <fullName>Mediator of RNA polymerase II transcription subunit 4</fullName>
    </recommendedName>
    <alternativeName>
        <fullName>Mediator complex subunit 4</fullName>
    </alternativeName>
</protein>
<reference key="1">
    <citation type="journal article" date="2003" name="PLoS Biol.">
        <title>The genome sequence of Caenorhabditis briggsae: a platform for comparative genomics.</title>
        <authorList>
            <person name="Stein L.D."/>
            <person name="Bao Z."/>
            <person name="Blasiar D."/>
            <person name="Blumenthal T."/>
            <person name="Brent M.R."/>
            <person name="Chen N."/>
            <person name="Chinwalla A."/>
            <person name="Clarke L."/>
            <person name="Clee C."/>
            <person name="Coghlan A."/>
            <person name="Coulson A."/>
            <person name="D'Eustachio P."/>
            <person name="Fitch D.H.A."/>
            <person name="Fulton L.A."/>
            <person name="Fulton R.E."/>
            <person name="Griffiths-Jones S."/>
            <person name="Harris T.W."/>
            <person name="Hillier L.W."/>
            <person name="Kamath R."/>
            <person name="Kuwabara P.E."/>
            <person name="Mardis E.R."/>
            <person name="Marra M.A."/>
            <person name="Miner T.L."/>
            <person name="Minx P."/>
            <person name="Mullikin J.C."/>
            <person name="Plumb R.W."/>
            <person name="Rogers J."/>
            <person name="Schein J.E."/>
            <person name="Sohrmann M."/>
            <person name="Spieth J."/>
            <person name="Stajich J.E."/>
            <person name="Wei C."/>
            <person name="Willey D."/>
            <person name="Wilson R.K."/>
            <person name="Durbin R.M."/>
            <person name="Waterston R.H."/>
        </authorList>
    </citation>
    <scope>NUCLEOTIDE SEQUENCE [LARGE SCALE GENOMIC DNA]</scope>
    <source>
        <strain>AF16</strain>
    </source>
</reference>
<evidence type="ECO:0000250" key="1"/>
<evidence type="ECO:0000255" key="2"/>
<evidence type="ECO:0000256" key="3">
    <source>
        <dbReference type="SAM" id="MobiDB-lite"/>
    </source>
</evidence>
<evidence type="ECO:0000305" key="4"/>
<comment type="function">
    <text evidence="1">Component of the Mediator complex, a coactivator involved in the regulated transcription of nearly all RNA polymerase II-dependent genes. Mediator functions as a bridge to convey information from gene-specific regulatory proteins to the basal RNA polymerase II transcription machinery. Mediator is recruited to promoters by direct interactions with regulatory proteins and serves as a scaffold for the assembly of a functional preinitiation complex with RNA polymerase II and the general transcription factors (By similarity).</text>
</comment>
<comment type="subunit">
    <text evidence="1">Component of the Mediator complex.</text>
</comment>
<comment type="subcellular location">
    <subcellularLocation>
        <location evidence="1">Nucleus</location>
    </subcellularLocation>
</comment>
<comment type="similarity">
    <text evidence="4">Belongs to the Mediator complex subunit 4 family.</text>
</comment>
<gene>
    <name type="primary">mdt-4</name>
    <name type="ORF">CBG02282</name>
</gene>
<keyword id="KW-0010">Activator</keyword>
<keyword id="KW-0175">Coiled coil</keyword>
<keyword id="KW-0539">Nucleus</keyword>
<keyword id="KW-1185">Reference proteome</keyword>
<keyword id="KW-0804">Transcription</keyword>
<keyword id="KW-0805">Transcription regulation</keyword>
<organism>
    <name type="scientific">Caenorhabditis briggsae</name>
    <dbReference type="NCBI Taxonomy" id="6238"/>
    <lineage>
        <taxon>Eukaryota</taxon>
        <taxon>Metazoa</taxon>
        <taxon>Ecdysozoa</taxon>
        <taxon>Nematoda</taxon>
        <taxon>Chromadorea</taxon>
        <taxon>Rhabditida</taxon>
        <taxon>Rhabditina</taxon>
        <taxon>Rhabditomorpha</taxon>
        <taxon>Rhabditoidea</taxon>
        <taxon>Rhabditidae</taxon>
        <taxon>Peloderinae</taxon>
        <taxon>Caenorhabditis</taxon>
    </lineage>
</organism>